<gene>
    <name evidence="1" type="primary">tyrS</name>
    <name type="ordered locus">EcHS_A1713</name>
</gene>
<reference key="1">
    <citation type="journal article" date="2008" name="J. Bacteriol.">
        <title>The pangenome structure of Escherichia coli: comparative genomic analysis of E. coli commensal and pathogenic isolates.</title>
        <authorList>
            <person name="Rasko D.A."/>
            <person name="Rosovitz M.J."/>
            <person name="Myers G.S.A."/>
            <person name="Mongodin E.F."/>
            <person name="Fricke W.F."/>
            <person name="Gajer P."/>
            <person name="Crabtree J."/>
            <person name="Sebaihia M."/>
            <person name="Thomson N.R."/>
            <person name="Chaudhuri R."/>
            <person name="Henderson I.R."/>
            <person name="Sperandio V."/>
            <person name="Ravel J."/>
        </authorList>
    </citation>
    <scope>NUCLEOTIDE SEQUENCE [LARGE SCALE GENOMIC DNA]</scope>
    <source>
        <strain>HS</strain>
    </source>
</reference>
<organism>
    <name type="scientific">Escherichia coli O9:H4 (strain HS)</name>
    <dbReference type="NCBI Taxonomy" id="331112"/>
    <lineage>
        <taxon>Bacteria</taxon>
        <taxon>Pseudomonadati</taxon>
        <taxon>Pseudomonadota</taxon>
        <taxon>Gammaproteobacteria</taxon>
        <taxon>Enterobacterales</taxon>
        <taxon>Enterobacteriaceae</taxon>
        <taxon>Escherichia</taxon>
    </lineage>
</organism>
<dbReference type="EC" id="6.1.1.1" evidence="1"/>
<dbReference type="EMBL" id="CP000802">
    <property type="protein sequence ID" value="ABV06034.1"/>
    <property type="molecule type" value="Genomic_DNA"/>
</dbReference>
<dbReference type="RefSeq" id="WP_001295400.1">
    <property type="nucleotide sequence ID" value="NC_009800.1"/>
</dbReference>
<dbReference type="SMR" id="A8A0I0"/>
<dbReference type="GeneID" id="93775791"/>
<dbReference type="KEGG" id="ecx:EcHS_A1713"/>
<dbReference type="HOGENOM" id="CLU_024003_0_3_6"/>
<dbReference type="GO" id="GO:0005829">
    <property type="term" value="C:cytosol"/>
    <property type="evidence" value="ECO:0007669"/>
    <property type="project" value="TreeGrafter"/>
</dbReference>
<dbReference type="GO" id="GO:0005524">
    <property type="term" value="F:ATP binding"/>
    <property type="evidence" value="ECO:0007669"/>
    <property type="project" value="UniProtKB-UniRule"/>
</dbReference>
<dbReference type="GO" id="GO:0003723">
    <property type="term" value="F:RNA binding"/>
    <property type="evidence" value="ECO:0007669"/>
    <property type="project" value="UniProtKB-KW"/>
</dbReference>
<dbReference type="GO" id="GO:0004831">
    <property type="term" value="F:tyrosine-tRNA ligase activity"/>
    <property type="evidence" value="ECO:0007669"/>
    <property type="project" value="UniProtKB-UniRule"/>
</dbReference>
<dbReference type="GO" id="GO:0006437">
    <property type="term" value="P:tyrosyl-tRNA aminoacylation"/>
    <property type="evidence" value="ECO:0007669"/>
    <property type="project" value="UniProtKB-UniRule"/>
</dbReference>
<dbReference type="CDD" id="cd00165">
    <property type="entry name" value="S4"/>
    <property type="match status" value="1"/>
</dbReference>
<dbReference type="CDD" id="cd00805">
    <property type="entry name" value="TyrRS_core"/>
    <property type="match status" value="1"/>
</dbReference>
<dbReference type="FunFam" id="1.10.240.10:FF:000001">
    <property type="entry name" value="Tyrosine--tRNA ligase"/>
    <property type="match status" value="1"/>
</dbReference>
<dbReference type="FunFam" id="3.10.290.10:FF:000007">
    <property type="entry name" value="Tyrosine--tRNA ligase"/>
    <property type="match status" value="1"/>
</dbReference>
<dbReference type="FunFam" id="3.40.50.620:FF:000008">
    <property type="entry name" value="Tyrosine--tRNA ligase"/>
    <property type="match status" value="1"/>
</dbReference>
<dbReference type="Gene3D" id="3.40.50.620">
    <property type="entry name" value="HUPs"/>
    <property type="match status" value="1"/>
</dbReference>
<dbReference type="Gene3D" id="3.10.290.10">
    <property type="entry name" value="RNA-binding S4 domain"/>
    <property type="match status" value="1"/>
</dbReference>
<dbReference type="Gene3D" id="1.10.240.10">
    <property type="entry name" value="Tyrosyl-Transfer RNA Synthetase"/>
    <property type="match status" value="1"/>
</dbReference>
<dbReference type="HAMAP" id="MF_02006">
    <property type="entry name" value="Tyr_tRNA_synth_type1"/>
    <property type="match status" value="1"/>
</dbReference>
<dbReference type="InterPro" id="IPR001412">
    <property type="entry name" value="aa-tRNA-synth_I_CS"/>
</dbReference>
<dbReference type="InterPro" id="IPR002305">
    <property type="entry name" value="aa-tRNA-synth_Ic"/>
</dbReference>
<dbReference type="InterPro" id="IPR014729">
    <property type="entry name" value="Rossmann-like_a/b/a_fold"/>
</dbReference>
<dbReference type="InterPro" id="IPR002942">
    <property type="entry name" value="S4_RNA-bd"/>
</dbReference>
<dbReference type="InterPro" id="IPR036986">
    <property type="entry name" value="S4_RNA-bd_sf"/>
</dbReference>
<dbReference type="InterPro" id="IPR054608">
    <property type="entry name" value="SYY-like_C"/>
</dbReference>
<dbReference type="InterPro" id="IPR002307">
    <property type="entry name" value="Tyr-tRNA-ligase"/>
</dbReference>
<dbReference type="InterPro" id="IPR024088">
    <property type="entry name" value="Tyr-tRNA-ligase_bac-type"/>
</dbReference>
<dbReference type="InterPro" id="IPR024107">
    <property type="entry name" value="Tyr-tRNA-ligase_bac_1"/>
</dbReference>
<dbReference type="NCBIfam" id="TIGR00234">
    <property type="entry name" value="tyrS"/>
    <property type="match status" value="1"/>
</dbReference>
<dbReference type="PANTHER" id="PTHR11766:SF0">
    <property type="entry name" value="TYROSINE--TRNA LIGASE, MITOCHONDRIAL"/>
    <property type="match status" value="1"/>
</dbReference>
<dbReference type="PANTHER" id="PTHR11766">
    <property type="entry name" value="TYROSYL-TRNA SYNTHETASE"/>
    <property type="match status" value="1"/>
</dbReference>
<dbReference type="Pfam" id="PF22421">
    <property type="entry name" value="SYY_C-terminal"/>
    <property type="match status" value="1"/>
</dbReference>
<dbReference type="Pfam" id="PF00579">
    <property type="entry name" value="tRNA-synt_1b"/>
    <property type="match status" value="1"/>
</dbReference>
<dbReference type="PRINTS" id="PR01040">
    <property type="entry name" value="TRNASYNTHTYR"/>
</dbReference>
<dbReference type="SMART" id="SM00363">
    <property type="entry name" value="S4"/>
    <property type="match status" value="1"/>
</dbReference>
<dbReference type="SUPFAM" id="SSF55174">
    <property type="entry name" value="Alpha-L RNA-binding motif"/>
    <property type="match status" value="1"/>
</dbReference>
<dbReference type="SUPFAM" id="SSF52374">
    <property type="entry name" value="Nucleotidylyl transferase"/>
    <property type="match status" value="1"/>
</dbReference>
<dbReference type="PROSITE" id="PS00178">
    <property type="entry name" value="AA_TRNA_LIGASE_I"/>
    <property type="match status" value="1"/>
</dbReference>
<dbReference type="PROSITE" id="PS50889">
    <property type="entry name" value="S4"/>
    <property type="match status" value="1"/>
</dbReference>
<keyword id="KW-0007">Acetylation</keyword>
<keyword id="KW-0030">Aminoacyl-tRNA synthetase</keyword>
<keyword id="KW-0067">ATP-binding</keyword>
<keyword id="KW-0963">Cytoplasm</keyword>
<keyword id="KW-0436">Ligase</keyword>
<keyword id="KW-0547">Nucleotide-binding</keyword>
<keyword id="KW-0648">Protein biosynthesis</keyword>
<keyword id="KW-0694">RNA-binding</keyword>
<protein>
    <recommendedName>
        <fullName evidence="1">Tyrosine--tRNA ligase</fullName>
        <ecNumber evidence="1">6.1.1.1</ecNumber>
    </recommendedName>
    <alternativeName>
        <fullName evidence="1">Tyrosyl-tRNA synthetase</fullName>
        <shortName evidence="1">TyrRS</shortName>
    </alternativeName>
</protein>
<proteinExistence type="inferred from homology"/>
<sequence length="424" mass="47527">MASSNLIKQLQERGLVAQVTDEEALAERLAQGPIALYCGFDPTADSLHLGHLVPLLCLKRFQQAGHKPVALVGGATGLIGDPSFKAAERKLNTEETVQEWVDKIRKQVAPFLDFDCGENSAIAANNYDWFGNMNVLTFLRDIGKHFSVNQMINKEAVKQRLNREDQGISFTEFSYNLLQGYDFACLNKQYGVVLQIGGSDQWGNITSGIDLTRRLHQNQVFGLTVPLITKADGTKFGKTEGGAVWLDPKKTSPYKFYQFWINTADADVYRFLKFFTFMSIEEINALEEEDKNSGKAPRAQYVLAEQVTRLVHGEEGLQAAKRITECLFSGSLSALSEADFEQLAQDGVPMVEMEKGADLMQALVDSELQPSRGQARKTIASNAITINGEKQSDPEYFFKEEDRLFGRFTLLRRGKKNYCLICWK</sequence>
<accession>A8A0I0</accession>
<name>SYY_ECOHS</name>
<comment type="function">
    <text evidence="1">Catalyzes the attachment of tyrosine to tRNA(Tyr) in a two-step reaction: tyrosine is first activated by ATP to form Tyr-AMP and then transferred to the acceptor end of tRNA(Tyr).</text>
</comment>
<comment type="catalytic activity">
    <reaction evidence="1">
        <text>tRNA(Tyr) + L-tyrosine + ATP = L-tyrosyl-tRNA(Tyr) + AMP + diphosphate + H(+)</text>
        <dbReference type="Rhea" id="RHEA:10220"/>
        <dbReference type="Rhea" id="RHEA-COMP:9706"/>
        <dbReference type="Rhea" id="RHEA-COMP:9707"/>
        <dbReference type="ChEBI" id="CHEBI:15378"/>
        <dbReference type="ChEBI" id="CHEBI:30616"/>
        <dbReference type="ChEBI" id="CHEBI:33019"/>
        <dbReference type="ChEBI" id="CHEBI:58315"/>
        <dbReference type="ChEBI" id="CHEBI:78442"/>
        <dbReference type="ChEBI" id="CHEBI:78536"/>
        <dbReference type="ChEBI" id="CHEBI:456215"/>
        <dbReference type="EC" id="6.1.1.1"/>
    </reaction>
</comment>
<comment type="subunit">
    <text evidence="1">Homodimer.</text>
</comment>
<comment type="subcellular location">
    <subcellularLocation>
        <location evidence="1">Cytoplasm</location>
    </subcellularLocation>
</comment>
<comment type="similarity">
    <text evidence="1">Belongs to the class-I aminoacyl-tRNA synthetase family. TyrS type 1 subfamily.</text>
</comment>
<evidence type="ECO:0000255" key="1">
    <source>
        <dbReference type="HAMAP-Rule" id="MF_02006"/>
    </source>
</evidence>
<feature type="chain" id="PRO_1000088586" description="Tyrosine--tRNA ligase">
    <location>
        <begin position="1"/>
        <end position="424"/>
    </location>
</feature>
<feature type="domain" description="S4 RNA-binding" evidence="1">
    <location>
        <begin position="357"/>
        <end position="414"/>
    </location>
</feature>
<feature type="short sequence motif" description="'HIGH' region">
    <location>
        <begin position="42"/>
        <end position="51"/>
    </location>
</feature>
<feature type="short sequence motif" description="'KMSKS' region">
    <location>
        <begin position="235"/>
        <end position="239"/>
    </location>
</feature>
<feature type="binding site" evidence="1">
    <location>
        <position position="37"/>
    </location>
    <ligand>
        <name>L-tyrosine</name>
        <dbReference type="ChEBI" id="CHEBI:58315"/>
    </ligand>
</feature>
<feature type="binding site" evidence="1">
    <location>
        <position position="175"/>
    </location>
    <ligand>
        <name>L-tyrosine</name>
        <dbReference type="ChEBI" id="CHEBI:58315"/>
    </ligand>
</feature>
<feature type="binding site" evidence="1">
    <location>
        <position position="179"/>
    </location>
    <ligand>
        <name>L-tyrosine</name>
        <dbReference type="ChEBI" id="CHEBI:58315"/>
    </ligand>
</feature>
<feature type="binding site" evidence="1">
    <location>
        <position position="238"/>
    </location>
    <ligand>
        <name>ATP</name>
        <dbReference type="ChEBI" id="CHEBI:30616"/>
    </ligand>
</feature>
<feature type="modified residue" description="N6-acetyllysine" evidence="1">
    <location>
        <position position="144"/>
    </location>
</feature>